<dbReference type="EMBL" id="BC030032">
    <property type="protein sequence ID" value="AAH30032.1"/>
    <property type="molecule type" value="mRNA"/>
</dbReference>
<dbReference type="EMBL" id="AA636653">
    <property type="status" value="NOT_ANNOTATED_CDS"/>
    <property type="molecule type" value="mRNA"/>
</dbReference>
<dbReference type="EMBL" id="AA516811">
    <property type="status" value="NOT_ANNOTATED_CDS"/>
    <property type="molecule type" value="mRNA"/>
</dbReference>
<dbReference type="CCDS" id="CCDS30011.1"/>
<dbReference type="RefSeq" id="NP_080251.3">
    <property type="nucleotide sequence ID" value="NM_025975.5"/>
</dbReference>
<dbReference type="SMR" id="P56387"/>
<dbReference type="BioGRID" id="211951">
    <property type="interactions" value="18"/>
</dbReference>
<dbReference type="FunCoup" id="P56387">
    <property type="interactions" value="167"/>
</dbReference>
<dbReference type="IntAct" id="P56387">
    <property type="interactions" value="3"/>
</dbReference>
<dbReference type="MINT" id="P56387"/>
<dbReference type="STRING" id="10090.ENSMUSP00000033519"/>
<dbReference type="iPTMnet" id="P56387"/>
<dbReference type="PhosphoSitePlus" id="P56387"/>
<dbReference type="SwissPalm" id="P56387"/>
<dbReference type="jPOST" id="P56387"/>
<dbReference type="PaxDb" id="10090-ENSMUSP00000033519"/>
<dbReference type="PeptideAtlas" id="P56387"/>
<dbReference type="ProteomicsDB" id="275418"/>
<dbReference type="Pumba" id="P56387"/>
<dbReference type="Antibodypedia" id="10567">
    <property type="antibodies" value="99 antibodies from 24 providers"/>
</dbReference>
<dbReference type="DNASU" id="67117"/>
<dbReference type="Ensembl" id="ENSMUST00000033519.3">
    <property type="protein sequence ID" value="ENSMUSP00000033519.3"/>
    <property type="gene ID" value="ENSMUSG00000031176.9"/>
</dbReference>
<dbReference type="GeneID" id="67117"/>
<dbReference type="KEGG" id="mmu:67117"/>
<dbReference type="UCSC" id="uc009spy.1">
    <property type="organism name" value="mouse"/>
</dbReference>
<dbReference type="AGR" id="MGI:1914367"/>
<dbReference type="CTD" id="6990"/>
<dbReference type="MGI" id="MGI:1914367">
    <property type="gene designation" value="Dynlt3"/>
</dbReference>
<dbReference type="VEuPathDB" id="HostDB:ENSMUSG00000031176"/>
<dbReference type="eggNOG" id="KOG4081">
    <property type="taxonomic scope" value="Eukaryota"/>
</dbReference>
<dbReference type="GeneTree" id="ENSGT00940000155009"/>
<dbReference type="HOGENOM" id="CLU_097204_7_0_1"/>
<dbReference type="InParanoid" id="P56387"/>
<dbReference type="OMA" id="HNDEMTF"/>
<dbReference type="OrthoDB" id="10059120at2759"/>
<dbReference type="PhylomeDB" id="P56387"/>
<dbReference type="TreeFam" id="TF313904"/>
<dbReference type="BioGRID-ORCS" id="67117">
    <property type="hits" value="2 hits in 76 CRISPR screens"/>
</dbReference>
<dbReference type="ChiTaRS" id="Dynlt3">
    <property type="organism name" value="mouse"/>
</dbReference>
<dbReference type="PRO" id="PR:P56387"/>
<dbReference type="Proteomes" id="UP000000589">
    <property type="component" value="Chromosome X"/>
</dbReference>
<dbReference type="RNAct" id="P56387">
    <property type="molecule type" value="protein"/>
</dbReference>
<dbReference type="Bgee" id="ENSMUSG00000031176">
    <property type="expression patterns" value="Expressed in choroid plexus epithelium and 272 other cell types or tissues"/>
</dbReference>
<dbReference type="ExpressionAtlas" id="P56387">
    <property type="expression patterns" value="baseline and differential"/>
</dbReference>
<dbReference type="GO" id="GO:0005868">
    <property type="term" value="C:cytoplasmic dynein complex"/>
    <property type="evidence" value="ECO:0000250"/>
    <property type="project" value="UniProtKB"/>
</dbReference>
<dbReference type="GO" id="GO:0000776">
    <property type="term" value="C:kinetochore"/>
    <property type="evidence" value="ECO:0007669"/>
    <property type="project" value="UniProtKB-KW"/>
</dbReference>
<dbReference type="GO" id="GO:0061673">
    <property type="term" value="C:mitotic spindle astral microtubule"/>
    <property type="evidence" value="ECO:0007669"/>
    <property type="project" value="Ensembl"/>
</dbReference>
<dbReference type="GO" id="GO:0005634">
    <property type="term" value="C:nucleus"/>
    <property type="evidence" value="ECO:0007669"/>
    <property type="project" value="UniProtKB-SubCell"/>
</dbReference>
<dbReference type="GO" id="GO:0042802">
    <property type="term" value="F:identical protein binding"/>
    <property type="evidence" value="ECO:0007669"/>
    <property type="project" value="Ensembl"/>
</dbReference>
<dbReference type="GO" id="GO:0051301">
    <property type="term" value="P:cell division"/>
    <property type="evidence" value="ECO:0007669"/>
    <property type="project" value="UniProtKB-KW"/>
</dbReference>
<dbReference type="GO" id="GO:0045931">
    <property type="term" value="P:positive regulation of mitotic cell cycle"/>
    <property type="evidence" value="ECO:0007669"/>
    <property type="project" value="Ensembl"/>
</dbReference>
<dbReference type="GO" id="GO:0007346">
    <property type="term" value="P:regulation of mitotic cell cycle"/>
    <property type="evidence" value="ECO:0000250"/>
    <property type="project" value="UniProtKB"/>
</dbReference>
<dbReference type="FunFam" id="3.30.1140.40:FF:000002">
    <property type="entry name" value="Dynein light chain Tctex-type 3"/>
    <property type="match status" value="1"/>
</dbReference>
<dbReference type="Gene3D" id="3.30.1140.40">
    <property type="entry name" value="Tctex-1"/>
    <property type="match status" value="1"/>
</dbReference>
<dbReference type="InterPro" id="IPR005334">
    <property type="entry name" value="Tctex-1-like"/>
</dbReference>
<dbReference type="InterPro" id="IPR038586">
    <property type="entry name" value="Tctex-1-like_sf"/>
</dbReference>
<dbReference type="PANTHER" id="PTHR21255:SF20">
    <property type="entry name" value="DYNEIN LIGHT CHAIN TCTEX-TYPE 3"/>
    <property type="match status" value="1"/>
</dbReference>
<dbReference type="PANTHER" id="PTHR21255">
    <property type="entry name" value="T-COMPLEX-ASSOCIATED-TESTIS-EXPRESSED 1/ DYNEIN LIGHT CHAIN"/>
    <property type="match status" value="1"/>
</dbReference>
<dbReference type="Pfam" id="PF03645">
    <property type="entry name" value="Tctex-1"/>
    <property type="match status" value="1"/>
</dbReference>
<keyword id="KW-0131">Cell cycle</keyword>
<keyword id="KW-0132">Cell division</keyword>
<keyword id="KW-0137">Centromere</keyword>
<keyword id="KW-0158">Chromosome</keyword>
<keyword id="KW-0963">Cytoplasm</keyword>
<keyword id="KW-0206">Cytoskeleton</keyword>
<keyword id="KW-0243">Dynein</keyword>
<keyword id="KW-0995">Kinetochore</keyword>
<keyword id="KW-0493">Microtubule</keyword>
<keyword id="KW-0498">Mitosis</keyword>
<keyword id="KW-0505">Motor protein</keyword>
<keyword id="KW-0944">Nitration</keyword>
<keyword id="KW-0539">Nucleus</keyword>
<keyword id="KW-1185">Reference proteome</keyword>
<keyword id="KW-0813">Transport</keyword>
<name>DYLT3_MOUSE</name>
<gene>
    <name type="primary">Dynlt3</name>
    <name type="synonym">Tcte1l</name>
</gene>
<sequence length="116" mass="12958">MEGYQRPCDEVGFNADEAHNIVKECVDGVLGGNDYNENNINQWTASIVEQSITHLVKLGKAYKYIVTCAVVQRSPYGFHTASSCFWDTTSDGTCTIRWENRTMNCIVNVFAVAIVL</sequence>
<reference key="1">
    <citation type="journal article" date="2004" name="Genome Res.">
        <title>The status, quality, and expansion of the NIH full-length cDNA project: the Mammalian Gene Collection (MGC).</title>
        <authorList>
            <consortium name="The MGC Project Team"/>
        </authorList>
    </citation>
    <scope>NUCLEOTIDE SEQUENCE [LARGE SCALE MRNA]</scope>
    <source>
        <strain>C57BL/6J</strain>
        <tissue>Mammary gland</tissue>
    </source>
</reference>
<reference key="2">
    <citation type="submission" date="1997-10" db="EMBL/GenBank/DDBJ databases">
        <authorList>
            <person name="Marra M."/>
            <person name="Hillier L."/>
            <person name="Allen M."/>
            <person name="Bowles M."/>
            <person name="Dietrich N."/>
            <person name="Dubuque T."/>
            <person name="Geisel S."/>
            <person name="Kucaba T."/>
            <person name="Lacy M."/>
            <person name="Le M."/>
            <person name="Martin J."/>
            <person name="Morris M."/>
            <person name="Schellenberg K."/>
            <person name="Steptoe M."/>
            <person name="Tan F."/>
            <person name="Underwood K."/>
            <person name="Moore B."/>
            <person name="Theising B."/>
            <person name="Wylie T."/>
            <person name="Lennon G."/>
            <person name="Soares B."/>
            <person name="Wilson R."/>
            <person name="Waterston R."/>
        </authorList>
    </citation>
    <scope>NUCLEOTIDE SEQUENCE [MRNA] OF 1-114 AND 23-116</scope>
</reference>
<reference key="3">
    <citation type="journal article" date="2006" name="Biochemistry">
        <title>Endogenously nitrated proteins in mouse brain: links to neurodegenerative disease.</title>
        <authorList>
            <person name="Sacksteder C.A."/>
            <person name="Qian W.-J."/>
            <person name="Knyushko T.V."/>
            <person name="Wang H."/>
            <person name="Chin M.H."/>
            <person name="Lacan G."/>
            <person name="Melega W.P."/>
            <person name="Camp D.G. II"/>
            <person name="Smith R.D."/>
            <person name="Smith D.J."/>
            <person name="Squier T.C."/>
            <person name="Bigelow D.J."/>
        </authorList>
    </citation>
    <scope>NITRATION [LARGE SCALE ANALYSIS] AT TYR-4</scope>
    <scope>IDENTIFICATION BY MASS SPECTROMETRY [LARGE SCALE ANALYSIS]</scope>
    <source>
        <tissue>Brain</tissue>
    </source>
</reference>
<reference key="4">
    <citation type="journal article" date="2007" name="J. Biol. Chem.">
        <title>The DYNLT3 light chain directly links cytoplasmic dynein to a spindle checkpoint protein, Bub3.</title>
        <authorList>
            <person name="Lo K.W."/>
            <person name="Kogoy J.M."/>
            <person name="Pfister K.K."/>
        </authorList>
    </citation>
    <scope>INTERACTION WITH BUB3</scope>
</reference>
<reference key="5">
    <citation type="journal article" date="2010" name="Cell">
        <title>A tissue-specific atlas of mouse protein phosphorylation and expression.</title>
        <authorList>
            <person name="Huttlin E.L."/>
            <person name="Jedrychowski M.P."/>
            <person name="Elias J.E."/>
            <person name="Goswami T."/>
            <person name="Rad R."/>
            <person name="Beausoleil S.A."/>
            <person name="Villen J."/>
            <person name="Haas W."/>
            <person name="Sowa M.E."/>
            <person name="Gygi S.P."/>
        </authorList>
    </citation>
    <scope>IDENTIFICATION BY MASS SPECTROMETRY [LARGE SCALE ANALYSIS]</scope>
    <source>
        <tissue>Brain</tissue>
        <tissue>Brown adipose tissue</tissue>
        <tissue>Heart</tissue>
        <tissue>Kidney</tissue>
        <tissue>Liver</tissue>
        <tissue>Lung</tissue>
        <tissue>Pancreas</tissue>
        <tissue>Testis</tissue>
    </source>
</reference>
<evidence type="ECO:0000250" key="1"/>
<evidence type="ECO:0000305" key="2"/>
<evidence type="ECO:0007744" key="3">
    <source>
    </source>
</evidence>
<protein>
    <recommendedName>
        <fullName>Dynein light chain Tctex-type 3</fullName>
    </recommendedName>
    <alternativeName>
        <fullName>Protein 91/23</fullName>
    </alternativeName>
    <alternativeName>
        <fullName>T-complex-associated testis-expressed 1-like</fullName>
    </alternativeName>
</protein>
<feature type="chain" id="PRO_0000195159" description="Dynein light chain Tctex-type 3">
    <location>
        <begin position="1"/>
        <end position="116"/>
    </location>
</feature>
<feature type="modified residue" description="3'-nitrotyrosine" evidence="3">
    <location>
        <position position="4"/>
    </location>
</feature>
<organism>
    <name type="scientific">Mus musculus</name>
    <name type="common">Mouse</name>
    <dbReference type="NCBI Taxonomy" id="10090"/>
    <lineage>
        <taxon>Eukaryota</taxon>
        <taxon>Metazoa</taxon>
        <taxon>Chordata</taxon>
        <taxon>Craniata</taxon>
        <taxon>Vertebrata</taxon>
        <taxon>Euteleostomi</taxon>
        <taxon>Mammalia</taxon>
        <taxon>Eutheria</taxon>
        <taxon>Euarchontoglires</taxon>
        <taxon>Glires</taxon>
        <taxon>Rodentia</taxon>
        <taxon>Myomorpha</taxon>
        <taxon>Muroidea</taxon>
        <taxon>Muridae</taxon>
        <taxon>Murinae</taxon>
        <taxon>Mus</taxon>
        <taxon>Mus</taxon>
    </lineage>
</organism>
<proteinExistence type="evidence at protein level"/>
<comment type="function">
    <text>Acts as one of several non-catalytic accessory components of the cytoplasmic dynein 1 complex that are thought to be involved in linking dynein to cargos and to adapter proteins that regulate dynein function. Cytoplasmic dynein 1 acts as a motor for the intracellular retrograde motility of vesicles and organelles along microtubules. Probably binds BUB3 as part of transport cargo. Required for the efficient progression through mitosis.</text>
</comment>
<comment type="subunit">
    <text evidence="1">Homodimer. The cytoplasmic dynein 1 complex consists of two catalytic heavy chains (HCs) and a number of non-catalytic subunits presented by intermediate chains (ICs), light intermediate chains (LICs) and light chains (LCs); the composition seems to vary in respect to the IC, LIC and LC composition. The heavy chain homodimer serves as a scaffold for the probable homodimeric assembly of the respective non-catalytic subunits. The ICs and LICs bind directly to the HC dimer and the LCs assemble on the IC dimer. DYNLT1 and DYNLT3 compete for association with dynein IC (DYNC1I1 or DYNC1I2). Self-associates. Interacts with DYNC1I1 and DYNC1I2. Interacts with BUB3. Interacts with SATB1 in nucleus to form complex with matrix attachment regions (MARs) of DNA (By similarity).</text>
</comment>
<comment type="subcellular location">
    <subcellularLocation>
        <location evidence="1">Nucleus</location>
    </subcellularLocation>
    <subcellularLocation>
        <location evidence="1">Cytoplasm</location>
        <location evidence="1">Cytoskeleton</location>
    </subcellularLocation>
    <subcellularLocation>
        <location evidence="1">Chromosome</location>
        <location evidence="1">Centromere</location>
        <location evidence="1">Kinetochore</location>
    </subcellularLocation>
</comment>
<comment type="similarity">
    <text evidence="2">Belongs to the dynein light chain Tctex-type family.</text>
</comment>
<accession>P56387</accession>